<sequence>MLYIYMHFPNPDTVTGNLIFQVLDKTVEMSSEQLHKLFTKHRSEFFTEIAALLKLNFIVIVDRYIWSGLAYAQADGITIETKDTFKPDYTFFLSSNKPLKEKPFNIQRLFEEKDKQEIIFNNFITIMNDVPKNKFCIIPAHLNKEIIYNIVLTKTLKVFDNNSCLKYIKMYDDKYLNVQDLNLIDFDWQKCIEDNNDKEEYDDNNFIV</sequence>
<organismHost>
    <name type="scientific">Ornithodoros</name>
    <name type="common">relapsing fever ticks</name>
    <dbReference type="NCBI Taxonomy" id="6937"/>
</organismHost>
<organismHost>
    <name type="scientific">Phacochoerus aethiopicus</name>
    <name type="common">Warthog</name>
    <dbReference type="NCBI Taxonomy" id="85517"/>
</organismHost>
<organismHost>
    <name type="scientific">Phacochoerus africanus</name>
    <name type="common">Warthog</name>
    <dbReference type="NCBI Taxonomy" id="41426"/>
</organismHost>
<organismHost>
    <name type="scientific">Potamochoerus larvatus</name>
    <name type="common">Bushpig</name>
    <dbReference type="NCBI Taxonomy" id="273792"/>
</organismHost>
<organismHost>
    <name type="scientific">Sus scrofa</name>
    <name type="common">Pig</name>
    <dbReference type="NCBI Taxonomy" id="9823"/>
</organismHost>
<gene>
    <name type="primary">TMK</name>
    <name type="ordered locus">Mal-044</name>
</gene>
<name>KTHY_ASFM2</name>
<accession>P0C8G0</accession>
<feature type="chain" id="PRO_0000355065" description="Truncated thymidylate kinase">
    <location>
        <begin position="1"/>
        <end position="208"/>
    </location>
</feature>
<proteinExistence type="inferred from homology"/>
<organism>
    <name type="scientific">African swine fever virus (isolate Tick/Malawi/Lil 20-1/1983)</name>
    <name type="common">ASFV</name>
    <dbReference type="NCBI Taxonomy" id="10500"/>
    <lineage>
        <taxon>Viruses</taxon>
        <taxon>Varidnaviria</taxon>
        <taxon>Bamfordvirae</taxon>
        <taxon>Nucleocytoviricota</taxon>
        <taxon>Pokkesviricetes</taxon>
        <taxon>Asfuvirales</taxon>
        <taxon>Asfarviridae</taxon>
        <taxon>Asfivirus</taxon>
        <taxon>African swine fever virus</taxon>
    </lineage>
</organism>
<dbReference type="EMBL" id="AY261361">
    <property type="status" value="NOT_ANNOTATED_CDS"/>
    <property type="molecule type" value="Genomic_DNA"/>
</dbReference>
<dbReference type="SMR" id="P0C8G0"/>
<dbReference type="Proteomes" id="UP000000860">
    <property type="component" value="Segment"/>
</dbReference>
<dbReference type="GO" id="GO:0004798">
    <property type="term" value="F:dTMP kinase activity"/>
    <property type="evidence" value="ECO:0007669"/>
    <property type="project" value="TreeGrafter"/>
</dbReference>
<dbReference type="GO" id="GO:0006233">
    <property type="term" value="P:dTDP biosynthetic process"/>
    <property type="evidence" value="ECO:0007669"/>
    <property type="project" value="TreeGrafter"/>
</dbReference>
<dbReference type="GO" id="GO:0006235">
    <property type="term" value="P:dTTP biosynthetic process"/>
    <property type="evidence" value="ECO:0007669"/>
    <property type="project" value="TreeGrafter"/>
</dbReference>
<dbReference type="GO" id="GO:0006227">
    <property type="term" value="P:dUDP biosynthetic process"/>
    <property type="evidence" value="ECO:0007669"/>
    <property type="project" value="TreeGrafter"/>
</dbReference>
<dbReference type="Gene3D" id="3.40.50.300">
    <property type="entry name" value="P-loop containing nucleotide triphosphate hydrolases"/>
    <property type="match status" value="1"/>
</dbReference>
<dbReference type="InterPro" id="IPR027417">
    <property type="entry name" value="P-loop_NTPase"/>
</dbReference>
<dbReference type="InterPro" id="IPR039430">
    <property type="entry name" value="Thymidylate_kin-like_dom"/>
</dbReference>
<dbReference type="PANTHER" id="PTHR10344">
    <property type="entry name" value="THYMIDYLATE KINASE"/>
    <property type="match status" value="1"/>
</dbReference>
<dbReference type="PANTHER" id="PTHR10344:SF1">
    <property type="entry name" value="THYMIDYLATE KINASE"/>
    <property type="match status" value="1"/>
</dbReference>
<dbReference type="Pfam" id="PF02223">
    <property type="entry name" value="Thymidylate_kin"/>
    <property type="match status" value="1"/>
</dbReference>
<dbReference type="SUPFAM" id="SSF52540">
    <property type="entry name" value="P-loop containing nucleoside triphosphate hydrolases"/>
    <property type="match status" value="1"/>
</dbReference>
<dbReference type="PROSITE" id="PS01331">
    <property type="entry name" value="THYMIDYLATE_KINASE"/>
    <property type="match status" value="1"/>
</dbReference>
<comment type="function">
    <text>Catalyzes the conversion of dTMP to dTDP.</text>
</comment>
<comment type="similarity">
    <text evidence="1">Belongs to the thymidylate kinase family.</text>
</comment>
<comment type="caution">
    <text evidence="1">The sequence is shorter than other asfivirus thymidylate kinase, possibly because of a sequencing error.</text>
</comment>
<reference key="1">
    <citation type="submission" date="2003-03" db="EMBL/GenBank/DDBJ databases">
        <title>African swine fever virus genomes.</title>
        <authorList>
            <person name="Kutish G.F."/>
            <person name="Rock D.L."/>
        </authorList>
    </citation>
    <scope>NUCLEOTIDE SEQUENCE [LARGE SCALE GENOMIC DNA]</scope>
</reference>
<protein>
    <recommendedName>
        <fullName>Truncated thymidylate kinase</fullName>
    </recommendedName>
</protein>
<evidence type="ECO:0000305" key="1"/>